<feature type="chain" id="PRO_0000418403" description="L-arabinitol 4-dehydrogenase">
    <location>
        <begin position="1"/>
        <end position="377"/>
    </location>
</feature>
<feature type="binding site" evidence="1">
    <location>
        <position position="66"/>
    </location>
    <ligand>
        <name>Zn(2+)</name>
        <dbReference type="ChEBI" id="CHEBI:29105"/>
        <label>1</label>
        <note>catalytic</note>
    </ligand>
</feature>
<feature type="binding site" evidence="1">
    <location>
        <position position="91"/>
    </location>
    <ligand>
        <name>Zn(2+)</name>
        <dbReference type="ChEBI" id="CHEBI:29105"/>
        <label>1</label>
        <note>catalytic</note>
    </ligand>
</feature>
<feature type="binding site" evidence="1">
    <location>
        <position position="92"/>
    </location>
    <ligand>
        <name>Zn(2+)</name>
        <dbReference type="ChEBI" id="CHEBI:29105"/>
        <label>1</label>
        <note>catalytic</note>
    </ligand>
</feature>
<feature type="binding site" evidence="1">
    <location>
        <position position="121"/>
    </location>
    <ligand>
        <name>Zn(2+)</name>
        <dbReference type="ChEBI" id="CHEBI:29105"/>
        <label>2</label>
        <note>structural</note>
    </ligand>
</feature>
<feature type="binding site" evidence="1">
    <location>
        <position position="124"/>
    </location>
    <ligand>
        <name>Zn(2+)</name>
        <dbReference type="ChEBI" id="CHEBI:29105"/>
        <label>2</label>
        <note>structural</note>
    </ligand>
</feature>
<feature type="binding site" evidence="1">
    <location>
        <position position="127"/>
    </location>
    <ligand>
        <name>Zn(2+)</name>
        <dbReference type="ChEBI" id="CHEBI:29105"/>
        <label>2</label>
        <note>structural</note>
    </ligand>
</feature>
<feature type="binding site" evidence="1">
    <location>
        <position position="135"/>
    </location>
    <ligand>
        <name>Zn(2+)</name>
        <dbReference type="ChEBI" id="CHEBI:29105"/>
        <label>2</label>
        <note>structural</note>
    </ligand>
</feature>
<feature type="binding site" evidence="1">
    <location>
        <position position="176"/>
    </location>
    <ligand>
        <name>Zn(2+)</name>
        <dbReference type="ChEBI" id="CHEBI:29105"/>
        <label>1</label>
        <note>catalytic</note>
    </ligand>
</feature>
<feature type="binding site" evidence="1">
    <location>
        <begin position="203"/>
        <end position="204"/>
    </location>
    <ligand>
        <name>NAD(+)</name>
        <dbReference type="ChEBI" id="CHEBI:57540"/>
    </ligand>
</feature>
<feature type="binding site" evidence="1">
    <location>
        <position position="224"/>
    </location>
    <ligand>
        <name>NAD(+)</name>
        <dbReference type="ChEBI" id="CHEBI:57540"/>
    </ligand>
</feature>
<feature type="binding site" evidence="1">
    <location>
        <position position="229"/>
    </location>
    <ligand>
        <name>NAD(+)</name>
        <dbReference type="ChEBI" id="CHEBI:57540"/>
    </ligand>
</feature>
<feature type="binding site" evidence="1">
    <location>
        <position position="296"/>
    </location>
    <ligand>
        <name>NAD(+)</name>
        <dbReference type="ChEBI" id="CHEBI:57540"/>
    </ligand>
</feature>
<feature type="binding site" evidence="1">
    <location>
        <begin position="320"/>
        <end position="322"/>
    </location>
    <ligand>
        <name>NAD(+)</name>
        <dbReference type="ChEBI" id="CHEBI:57540"/>
    </ligand>
</feature>
<feature type="mutagenesis site" description="Alters cofactor specificity from NAD to NADP; when associated with T-362." evidence="5">
    <original>DI</original>
    <variation>SR</variation>
    <location>
        <begin position="224"/>
        <end position="225"/>
    </location>
</feature>
<feature type="mutagenesis site" description="Alters cofactor specificity from NAD to NADP; when associated with 224-SR-225." evidence="5">
    <original>A</original>
    <variation>T</variation>
    <location>
        <position position="362"/>
    </location>
</feature>
<organism>
    <name type="scientific">Hypocrea jecorina</name>
    <name type="common">Trichoderma reesei</name>
    <dbReference type="NCBI Taxonomy" id="51453"/>
    <lineage>
        <taxon>Eukaryota</taxon>
        <taxon>Fungi</taxon>
        <taxon>Dikarya</taxon>
        <taxon>Ascomycota</taxon>
        <taxon>Pezizomycotina</taxon>
        <taxon>Sordariomycetes</taxon>
        <taxon>Hypocreomycetidae</taxon>
        <taxon>Hypocreales</taxon>
        <taxon>Hypocreaceae</taxon>
        <taxon>Trichoderma</taxon>
    </lineage>
</organism>
<gene>
    <name type="primary">lad1</name>
</gene>
<accession>Q96V44</accession>
<protein>
    <recommendedName>
        <fullName>L-arabinitol 4-dehydrogenase</fullName>
        <shortName>LAD</shortName>
        <ecNumber>1.1.1.12</ecNumber>
    </recommendedName>
</protein>
<keyword id="KW-0054">Arabinose catabolism</keyword>
<keyword id="KW-0119">Carbohydrate metabolism</keyword>
<keyword id="KW-0903">Direct protein sequencing</keyword>
<keyword id="KW-0299">Galactose metabolism</keyword>
<keyword id="KW-0479">Metal-binding</keyword>
<keyword id="KW-0520">NAD</keyword>
<keyword id="KW-0560">Oxidoreductase</keyword>
<keyword id="KW-0859">Xylose metabolism</keyword>
<keyword id="KW-0862">Zinc</keyword>
<name>LAD_HYPJE</name>
<evidence type="ECO:0000250" key="1"/>
<evidence type="ECO:0000269" key="2">
    <source>
    </source>
</evidence>
<evidence type="ECO:0000269" key="3">
    <source>
    </source>
</evidence>
<evidence type="ECO:0000269" key="4">
    <source>
    </source>
</evidence>
<evidence type="ECO:0000269" key="5">
    <source>
    </source>
</evidence>
<evidence type="ECO:0000305" key="6"/>
<dbReference type="EC" id="1.1.1.12"/>
<dbReference type="EMBL" id="AF355628">
    <property type="protein sequence ID" value="AAL08944.1"/>
    <property type="molecule type" value="mRNA"/>
</dbReference>
<dbReference type="EMBL" id="AY225444">
    <property type="protein sequence ID" value="AAP57209.1"/>
    <property type="molecule type" value="Genomic_DNA"/>
</dbReference>
<dbReference type="SMR" id="Q96V44"/>
<dbReference type="VEuPathDB" id="FungiDB:TrQ_003398"/>
<dbReference type="OMA" id="MRVAMYY"/>
<dbReference type="BioCyc" id="MetaCyc:MONOMER-13196"/>
<dbReference type="BRENDA" id="1.1.1.12">
    <property type="organism ID" value="6451"/>
</dbReference>
<dbReference type="SABIO-RK" id="Q96V44"/>
<dbReference type="UniPathway" id="UPA00146">
    <property type="reaction ID" value="UER00575"/>
</dbReference>
<dbReference type="GO" id="GO:0050019">
    <property type="term" value="F:L-arabinitol 4-dehydrogenase activity"/>
    <property type="evidence" value="ECO:0000314"/>
    <property type="project" value="UniProtKB"/>
</dbReference>
<dbReference type="GO" id="GO:0003939">
    <property type="term" value="F:L-iditol 2-dehydrogenase (NAD+) activity"/>
    <property type="evidence" value="ECO:0007669"/>
    <property type="project" value="TreeGrafter"/>
</dbReference>
<dbReference type="GO" id="GO:0046872">
    <property type="term" value="F:metal ion binding"/>
    <property type="evidence" value="ECO:0007669"/>
    <property type="project" value="UniProtKB-KW"/>
</dbReference>
<dbReference type="GO" id="GO:0019568">
    <property type="term" value="P:arabinose catabolic process"/>
    <property type="evidence" value="ECO:0000315"/>
    <property type="project" value="UniProtKB"/>
</dbReference>
<dbReference type="GO" id="GO:0042843">
    <property type="term" value="P:D-xylose catabolic process"/>
    <property type="evidence" value="ECO:0000315"/>
    <property type="project" value="UniProtKB"/>
</dbReference>
<dbReference type="GO" id="GO:0019388">
    <property type="term" value="P:galactose catabolic process"/>
    <property type="evidence" value="ECO:0000315"/>
    <property type="project" value="UniProtKB"/>
</dbReference>
<dbReference type="GO" id="GO:0019569">
    <property type="term" value="P:L-arabinose catabolic process to xylulose 5-phosphate"/>
    <property type="evidence" value="ECO:0007669"/>
    <property type="project" value="UniProtKB-UniPathway"/>
</dbReference>
<dbReference type="GO" id="GO:0006062">
    <property type="term" value="P:sorbitol catabolic process"/>
    <property type="evidence" value="ECO:0007669"/>
    <property type="project" value="TreeGrafter"/>
</dbReference>
<dbReference type="CDD" id="cd05285">
    <property type="entry name" value="sorbitol_DH"/>
    <property type="match status" value="1"/>
</dbReference>
<dbReference type="FunFam" id="3.40.50.720:FF:000068">
    <property type="entry name" value="Sorbitol dehydrogenase"/>
    <property type="match status" value="1"/>
</dbReference>
<dbReference type="Gene3D" id="3.90.180.10">
    <property type="entry name" value="Medium-chain alcohol dehydrogenases, catalytic domain"/>
    <property type="match status" value="1"/>
</dbReference>
<dbReference type="Gene3D" id="3.40.50.720">
    <property type="entry name" value="NAD(P)-binding Rossmann-like Domain"/>
    <property type="match status" value="1"/>
</dbReference>
<dbReference type="InterPro" id="IPR013149">
    <property type="entry name" value="ADH-like_C"/>
</dbReference>
<dbReference type="InterPro" id="IPR013154">
    <property type="entry name" value="ADH-like_N"/>
</dbReference>
<dbReference type="InterPro" id="IPR011032">
    <property type="entry name" value="GroES-like_sf"/>
</dbReference>
<dbReference type="InterPro" id="IPR036291">
    <property type="entry name" value="NAD(P)-bd_dom_sf"/>
</dbReference>
<dbReference type="InterPro" id="IPR045306">
    <property type="entry name" value="SDH-like"/>
</dbReference>
<dbReference type="PANTHER" id="PTHR43161:SF12">
    <property type="entry name" value="L-ARABINITOL 4-DEHYDROGENASE"/>
    <property type="match status" value="1"/>
</dbReference>
<dbReference type="PANTHER" id="PTHR43161">
    <property type="entry name" value="SORBITOL DEHYDROGENASE"/>
    <property type="match status" value="1"/>
</dbReference>
<dbReference type="Pfam" id="PF08240">
    <property type="entry name" value="ADH_N"/>
    <property type="match status" value="1"/>
</dbReference>
<dbReference type="Pfam" id="PF00107">
    <property type="entry name" value="ADH_zinc_N"/>
    <property type="match status" value="1"/>
</dbReference>
<dbReference type="SUPFAM" id="SSF50129">
    <property type="entry name" value="GroES-like"/>
    <property type="match status" value="1"/>
</dbReference>
<dbReference type="SUPFAM" id="SSF51735">
    <property type="entry name" value="NAD(P)-binding Rossmann-fold domains"/>
    <property type="match status" value="1"/>
</dbReference>
<proteinExistence type="evidence at protein level"/>
<sequence>MSPSAVDDAPKATGAAISVKPNIGVFTNPKHDLWISEAEPSADAVKSGADLKPGEVTIAVRSTGICGSDVHFWHAGCIGPMIVEGDHILGHESAGEVIAVHPTVSSLQIGDRVAIEPNIICNACEPCLTGRYNGCEKVEFLSTPPVPGLLRRYVNHPAVWCHKIGNMSWENGALLEPLSVALAGMQRAKVQLGDPVLVCGAGPIGLVSMLCAAAAGACPLVITDISESRLAFAKEICPRVTTHRIEIGKSAEETAKSIVSSFGGVEPAVTLECTGVESSIAAAIWASKFGGKVFVIGVGKNEISIPFMRASVREVDIQLQYRYSNTWPRAIRLIESGVIDLSKFVTHRFPLEDAVKAFETSADPKSGAIKVMIQSLD</sequence>
<comment type="function">
    <text evidence="2 3 4 5">Catalyzes the NAD-dependent oxidation of L-arabinitol to L-xylulose in the fungal L-arabinose catabolic pathway. L-arabinose catabolism is important for using plant material as a carbon source. Can partially compensate for xylitol dehydrogenase in xdh1 mutants. Also oxidizes galactitol to L-xylo-3-hexulose as an alternative to the standard Leloir pathway for D-galactose metabolism. NADP cannot act as a cosubstrate.</text>
</comment>
<comment type="catalytic activity">
    <reaction evidence="2">
        <text>L-arabinitol + NAD(+) = L-xylulose + NADH + H(+)</text>
        <dbReference type="Rhea" id="RHEA:16381"/>
        <dbReference type="ChEBI" id="CHEBI:15378"/>
        <dbReference type="ChEBI" id="CHEBI:17399"/>
        <dbReference type="ChEBI" id="CHEBI:18403"/>
        <dbReference type="ChEBI" id="CHEBI:57540"/>
        <dbReference type="ChEBI" id="CHEBI:57945"/>
        <dbReference type="EC" id="1.1.1.12"/>
    </reaction>
</comment>
<comment type="cofactor">
    <cofactor evidence="5">
        <name>Zn(2+)</name>
        <dbReference type="ChEBI" id="CHEBI:29105"/>
    </cofactor>
    <text evidence="5">Binds 2 Zn(2+) ions per subunit.</text>
</comment>
<comment type="biophysicochemical properties">
    <kinetics>
        <KM evidence="2 4 5">18 mM for L-arabinitol (at pH 7)</KM>
        <KM evidence="2 4 5">200 mM for xylitol (at pH 7)</KM>
        <KM evidence="2 4 5">4.5 mM for L-arabinitol (at pH 8.6)</KM>
        <KM evidence="2 4 5">25 mM for D-talitol (at pH 8.6)</KM>
        <KM evidence="2 4 5">60 mM for galactitol (at pH 8.6)</KM>
        <KM evidence="2 4 5">46 mM for D-sorbitol (at pH 8.6)</KM>
        <KM evidence="2 4 5">11.3 mM for D-allitol (at pH 8.6)</KM>
        <KM evidence="2 4 5">37 mM for L-mannitol (at pH 8.6)</KM>
        <KM evidence="2 4 5">191 mM for L-iditol (at pH 8.6)</KM>
        <KM evidence="2 4 5">580 mM for D-arabino-3-hexulose (at pH 8.6)</KM>
        <KM evidence="2 4 5">81 mM for L-xylo-3-hexulose (at pH 8.6)</KM>
        <KM evidence="2 4 5">96 mM for D-fructose (at pH 8.6)</KM>
        <KM evidence="2 4 5">81 mM for D-psicose (at pH 8.6)</KM>
        <KM evidence="2 4 5">19 mM for L-sorbitol (at pH 8.6)</KM>
        <KM evidence="2 4 5">28 mM for L-tagatose (at pH 8.6)</KM>
        <KM evidence="2 4 5">115 mM for D-sorbose (at pH 8.6)</KM>
        <KM evidence="2 4 5">180 uM for NAD (at pH 7)</KM>
        <Vmax evidence="2 4 5">27.0 nmol/sec/mg enzyme with L-arabinitol as substrate (at pH 9 and 10)</Vmax>
        <Vmax evidence="2 4 5">10.0 nmol/sec/mg enzyme with L-arabinitol as substrate (at pH 7)</Vmax>
        <Vmax evidence="2 4 5">6.0 nmol/sec/mg enzyme with xylitol as substrate (at pH 7)</Vmax>
        <Vmax evidence="2 4 5">0.213 nmol/sec/mg enzyme with L-arabinitol as substrate (at pH 8.6)</Vmax>
        <Vmax evidence="2 4 5">0.146 nmol/sec/mg enzyme with D-talitol as substrate (at pH 8.6)</Vmax>
        <Vmax evidence="2 4 5">0.012 nmol/sec/mg enzyme with galactitol as substrate (at pH 8.6)</Vmax>
        <Vmax evidence="2 4 5">0.034 nmol/sec/mg enzyme with D-sorbitol as substrate (at pH 8.6)</Vmax>
        <Vmax evidence="2 4 5">0.008 nmol/sec/mg enzyme with D-allitol as substrate (at pH 8.6)</Vmax>
        <Vmax evidence="2 4 5">0.027 nmol/sec/mg enzyme with L-mannitol as substrate (at pH 8.6)</Vmax>
        <Vmax evidence="2 4 5">0.021 nmol/sec/mg enzyme with L-iditol as substrate (at pH 8.6)</Vmax>
        <Vmax evidence="2 4 5">0.969 nmol/sec/mg enzyme with D-arabino-3-hexulose as substrate (at pH 8.6)</Vmax>
        <Vmax evidence="2 4 5">0.197 nmol/sec/mg enzyme with L-xylo-3-hexulose as substrate (at pH 8.6)</Vmax>
        <Vmax evidence="2 4 5">0.008 nmol/sec/mg enzyme with D-fructose as substrate (at pH 8.6)</Vmax>
        <Vmax evidence="2 4 5">0.011 nmol/sec/mg enzyme with D-psicose as substrate (at pH 8.6)</Vmax>
        <Vmax evidence="2 4 5">0.001 nmol/sec/mg enzyme with L-sorbitol as substrate (at pH 8.6)</Vmax>
        <Vmax evidence="2 4 5">0.003 nmol/sec/mg enzyme with L-tagatose as substrate (at pH 8.6)</Vmax>
        <Vmax evidence="2 4 5">0.001 nmol/sec/mg enzyme with D-sorbose as substrate (at pH 8.6)</Vmax>
    </kinetics>
    <phDependence>
        <text evidence="2 4 5">Optimum pH is 9.4. Active from pH 7 to pH 11.</text>
    </phDependence>
    <temperatureDependence>
        <text evidence="2 4 5">Optimum temperature is 55-65 degrees Celsius.</text>
    </temperatureDependence>
</comment>
<comment type="pathway">
    <text>Carbohydrate degradation; L-arabinose degradation via L-arabinitol; D-xylulose 5-phosphate from L-arabinose (fungal route): step 2/5.</text>
</comment>
<comment type="subunit">
    <text evidence="5">Homotetramer.</text>
</comment>
<comment type="induction">
    <text evidence="2">Only expressed when grown on L-arabinose.</text>
</comment>
<comment type="PTM">
    <text>The N-terminus is blocked.</text>
</comment>
<comment type="similarity">
    <text evidence="6">Belongs to the zinc-containing alcohol dehydrogenase family.</text>
</comment>
<reference key="1">
    <citation type="journal article" date="2001" name="J. Biol. Chem.">
        <title>Cloning and expression of a fungal L-arabinitol 4-dehydrogenase gene.</title>
        <authorList>
            <person name="Richard P."/>
            <person name="Londesborough J."/>
            <person name="Putkonen M."/>
            <person name="Kalkkinen N."/>
            <person name="Penttila M."/>
        </authorList>
    </citation>
    <scope>NUCLEOTIDE SEQUENCE [GENOMIC DNA / MRNA]</scope>
    <scope>PROTEIN SEQUENCE OF 12-40; 323-329 AND 357-365</scope>
    <scope>FUNCTION</scope>
    <scope>CATALYTIC ACTIVITY</scope>
    <scope>INDUCTION</scope>
    <scope>BIOPHYSICOCHEMICAL PROPERTIES</scope>
    <source>
        <strain>ATCC 56765 / Rut C-30</strain>
    </source>
</reference>
<reference key="2">
    <citation type="journal article" date="2003" name="Eukaryot. Cell">
        <title>D-xylose metabolism in Hypocrea jecorina: loss of the xylitol dehydrogenase step can be partially compensated for by lad1-encoded L-arabinitol-4-dehydrogenase.</title>
        <authorList>
            <person name="Seiboth B."/>
            <person name="Hartl L."/>
            <person name="Pail M."/>
            <person name="Kubicek C.P."/>
        </authorList>
    </citation>
    <scope>NUCLEOTIDE SEQUENCE [GENOMIC DNA]</scope>
    <scope>FUNCTION</scope>
    <source>
        <strain>ATCC 26921 / CBS 392.92 / QM9414</strain>
    </source>
</reference>
<reference key="3">
    <citation type="journal article" date="2004" name="Eur. J. Biochem.">
        <title>The metabolic role and evolution of L-arabinitol 4-dehydrogenase of Hypocrea jecorina.</title>
        <authorList>
            <person name="Pail M."/>
            <person name="Peterbauer T."/>
            <person name="Seiboth B."/>
            <person name="Hametner C."/>
            <person name="Druzhinina I."/>
            <person name="Kubicek C.P."/>
        </authorList>
    </citation>
    <scope>FUNCTION</scope>
    <scope>BIOPHYSICOCHEMICAL PROPERTIES</scope>
</reference>
<reference key="4">
    <citation type="journal article" date="2010" name="Appl. Microbiol. Biotechnol.">
        <title>Cloning, characterization, and engineering of fungal L-arabinitol dehydrogenases.</title>
        <authorList>
            <person name="Kim B."/>
            <person name="Sullivan R.P."/>
            <person name="Zhao H."/>
        </authorList>
    </citation>
    <scope>FUNCTION</scope>
    <scope>BIOPHYSICOCHEMICAL PROPERTIES</scope>
    <scope>COFACTOR</scope>
    <scope>SUBUNIT</scope>
    <scope>MUTAGENESIS OF 224-ASP-ILE-225 AND ALA-362</scope>
    <scope>ZINC-BINDING</scope>
</reference>